<sequence>QPNPDEFFGLM</sequence>
<dbReference type="PIR" id="E60409">
    <property type="entry name" value="E60409"/>
</dbReference>
<dbReference type="GO" id="GO:0005576">
    <property type="term" value="C:extracellular region"/>
    <property type="evidence" value="ECO:0007669"/>
    <property type="project" value="UniProtKB-SubCell"/>
</dbReference>
<dbReference type="GO" id="GO:0006952">
    <property type="term" value="P:defense response"/>
    <property type="evidence" value="ECO:0007669"/>
    <property type="project" value="UniProtKB-KW"/>
</dbReference>
<dbReference type="GO" id="GO:0007218">
    <property type="term" value="P:neuropeptide signaling pathway"/>
    <property type="evidence" value="ECO:0007669"/>
    <property type="project" value="UniProtKB-KW"/>
</dbReference>
<dbReference type="GO" id="GO:0007217">
    <property type="term" value="P:tachykinin receptor signaling pathway"/>
    <property type="evidence" value="ECO:0007669"/>
    <property type="project" value="InterPro"/>
</dbReference>
<dbReference type="InterPro" id="IPR013055">
    <property type="entry name" value="Tachy_Neuro_lke_CS"/>
</dbReference>
<dbReference type="InterPro" id="IPR008215">
    <property type="entry name" value="Tachykinin_dom"/>
</dbReference>
<dbReference type="Pfam" id="PF02202">
    <property type="entry name" value="Tachykinin"/>
    <property type="match status" value="1"/>
</dbReference>
<dbReference type="PROSITE" id="PS00267">
    <property type="entry name" value="TACHYKININ"/>
    <property type="match status" value="1"/>
</dbReference>
<organism>
    <name type="scientific">Pseudophryne guentheri</name>
    <name type="common">Guenther's toadlet</name>
    <dbReference type="NCBI Taxonomy" id="30349"/>
    <lineage>
        <taxon>Eukaryota</taxon>
        <taxon>Metazoa</taxon>
        <taxon>Chordata</taxon>
        <taxon>Craniata</taxon>
        <taxon>Vertebrata</taxon>
        <taxon>Euteleostomi</taxon>
        <taxon>Amphibia</taxon>
        <taxon>Batrachia</taxon>
        <taxon>Anura</taxon>
        <taxon>Neobatrachia</taxon>
        <taxon>Myobatrachoidea</taxon>
        <taxon>Myobatrachidae</taxon>
        <taxon>Myobatrachinae</taxon>
        <taxon>Pseudophryne</taxon>
    </lineage>
</organism>
<name>TKN4_PSEGU</name>
<protein>
    <recommendedName>
        <fullName>Substance P-like peptide 1</fullName>
    </recommendedName>
    <alternativeName>
        <fullName>PG-SPI</fullName>
    </alternativeName>
</protein>
<evidence type="ECO:0000269" key="1">
    <source>
    </source>
</evidence>
<evidence type="ECO:0000305" key="2"/>
<proteinExistence type="evidence at protein level"/>
<accession>P42989</accession>
<keyword id="KW-0027">Amidation</keyword>
<keyword id="KW-0878">Amphibian defense peptide</keyword>
<keyword id="KW-0903">Direct protein sequencing</keyword>
<keyword id="KW-0527">Neuropeptide</keyword>
<keyword id="KW-0873">Pyrrolidone carboxylic acid</keyword>
<keyword id="KW-0964">Secreted</keyword>
<reference key="1">
    <citation type="journal article" date="1990" name="Peptides">
        <title>Six novel tachykinin- and bombesin-related peptides from the skin of the Australian frog Pseudophryne guntheri.</title>
        <authorList>
            <person name="Simmaco M."/>
            <person name="Severini C."/>
            <person name="de Biase D."/>
            <person name="Barra D."/>
            <person name="Bossa F."/>
            <person name="Roberts J.D."/>
            <person name="Melchiorri P."/>
            <person name="Erspamer V."/>
        </authorList>
    </citation>
    <scope>PROTEIN SEQUENCE</scope>
    <scope>PYROGLUTAMATE FORMATION AT GLN-1</scope>
    <scope>AMIDATION AT MET-11</scope>
    <source>
        <tissue>Skin secretion</tissue>
    </source>
</reference>
<feature type="peptide" id="PRO_0000044403" description="Substance P-like peptide 1">
    <location>
        <begin position="1"/>
        <end position="11"/>
    </location>
</feature>
<feature type="modified residue" description="Pyrrolidone carboxylic acid" evidence="1">
    <location>
        <position position="1"/>
    </location>
</feature>
<feature type="modified residue" description="Methionine amide" evidence="1">
    <location>
        <position position="11"/>
    </location>
</feature>
<comment type="function">
    <text>Tachykinins are active peptides which excite neurons, evoke behavioral responses, are potent vasodilators and secretagogues, and contract (directly or indirectly) many smooth muscles.</text>
</comment>
<comment type="subcellular location">
    <subcellularLocation>
        <location>Secreted</location>
    </subcellularLocation>
</comment>
<comment type="tissue specificity">
    <text>Expressed by the skin glands.</text>
</comment>
<comment type="similarity">
    <text evidence="2">Belongs to the tachykinin family.</text>
</comment>